<protein>
    <recommendedName>
        <fullName>U4-theraphotoxin-Hhn1a</fullName>
        <shortName>U4-TRTX-Hhn1a</shortName>
    </recommendedName>
    <alternativeName>
        <fullName>Hainantoxin-II.12</fullName>
        <shortName>HNTX-II.12</shortName>
    </alternativeName>
    <alternativeName>
        <fullName>Peptide F8-20.15</fullName>
    </alternativeName>
</protein>
<accession>D2Y230</accession>
<evidence type="ECO:0000250" key="1"/>
<evidence type="ECO:0000255" key="2"/>
<evidence type="ECO:0000269" key="3">
    <source>
    </source>
</evidence>
<evidence type="ECO:0000269" key="4">
    <source>
    </source>
</evidence>
<evidence type="ECO:0000305" key="5"/>
<proteinExistence type="evidence at protein level"/>
<feature type="signal peptide" evidence="2">
    <location>
        <begin position="1"/>
        <end position="22"/>
    </location>
</feature>
<feature type="propeptide" id="PRO_0000400739" evidence="3 4">
    <location>
        <begin position="23"/>
        <end position="48"/>
    </location>
</feature>
<feature type="peptide" id="PRO_0000400740" description="U4-theraphotoxin-Hhn1a">
    <location>
        <begin position="49"/>
        <end position="85"/>
    </location>
</feature>
<feature type="disulfide bond" evidence="1">
    <location>
        <begin position="52"/>
        <end position="66"/>
    </location>
</feature>
<feature type="disulfide bond" evidence="1">
    <location>
        <begin position="56"/>
        <end position="77"/>
    </location>
</feature>
<feature type="disulfide bond" evidence="1">
    <location>
        <begin position="71"/>
        <end position="82"/>
    </location>
</feature>
<keyword id="KW-0903">Direct protein sequencing</keyword>
<keyword id="KW-1015">Disulfide bond</keyword>
<keyword id="KW-0528">Neurotoxin</keyword>
<keyword id="KW-0629">Postsynaptic neurotoxin</keyword>
<keyword id="KW-0964">Secreted</keyword>
<keyword id="KW-0732">Signal</keyword>
<keyword id="KW-0800">Toxin</keyword>
<reference key="1">
    <citation type="journal article" date="2010" name="J. Proteome Res.">
        <title>Molecular diversification of peptide toxins from the tarantula Haplopelma hainanum (Ornithoctonus hainana) venom based on transcriptomic, peptidomic, and genomic analyses.</title>
        <authorList>
            <person name="Tang X."/>
            <person name="Zhang Y."/>
            <person name="Hu W."/>
            <person name="Xu D."/>
            <person name="Tao H."/>
            <person name="Yang X."/>
            <person name="Li Y."/>
            <person name="Jiang L."/>
            <person name="Liang S."/>
        </authorList>
    </citation>
    <scope>NUCLEOTIDE SEQUENCE [LARGE SCALE MRNA]</scope>
    <scope>PROTEIN SEQUENCE OF 49-85</scope>
    <scope>IDENTIFICATION BY MASS SPECTROMETRY</scope>
    <source>
        <tissue>Venom</tissue>
        <tissue>Venom gland</tissue>
    </source>
</reference>
<reference key="2">
    <citation type="journal article" date="2010" name="Dong Wu Xue Yan Jiu">
        <title>Isolation and characterization of Hainantoxin-II, a new neurotoxic peptide from the Chinese bird spider (Haplopelma hainanum).</title>
        <authorList>
            <person name="Pan J.Y."/>
            <person name="Yu Z.Q."/>
        </authorList>
    </citation>
    <scope>PROTEIN SEQUENCE OF 49-85</scope>
    <scope>FUNCTION</scope>
    <scope>MASS SPECTROMETRY</scope>
    <scope>TOXIC DOSE</scope>
    <source>
        <tissue>Venom</tissue>
    </source>
</reference>
<sequence length="85" mass="9368">MKVTLIAILTCAAVLVLHTTAAEELEAEGQLMEVGMPDTELAAVDEERLFECSVSCEIEKEGNKDCKKKKCKGGWKCKFNMCVKV</sequence>
<organism>
    <name type="scientific">Cyriopagopus hainanus</name>
    <name type="common">Chinese bird spider</name>
    <name type="synonym">Haplopelma hainanum</name>
    <dbReference type="NCBI Taxonomy" id="209901"/>
    <lineage>
        <taxon>Eukaryota</taxon>
        <taxon>Metazoa</taxon>
        <taxon>Ecdysozoa</taxon>
        <taxon>Arthropoda</taxon>
        <taxon>Chelicerata</taxon>
        <taxon>Arachnida</taxon>
        <taxon>Araneae</taxon>
        <taxon>Mygalomorphae</taxon>
        <taxon>Theraphosidae</taxon>
        <taxon>Haplopelma</taxon>
    </lineage>
</organism>
<dbReference type="EMBL" id="GU292907">
    <property type="protein sequence ID" value="ADB56723.1"/>
    <property type="molecule type" value="mRNA"/>
</dbReference>
<dbReference type="SMR" id="D2Y230"/>
<dbReference type="ArachnoServer" id="AS001783">
    <property type="toxin name" value="U4-theraphotoxin-Hhn1a"/>
</dbReference>
<dbReference type="GO" id="GO:0005576">
    <property type="term" value="C:extracellular region"/>
    <property type="evidence" value="ECO:0007669"/>
    <property type="project" value="UniProtKB-SubCell"/>
</dbReference>
<dbReference type="GO" id="GO:0035792">
    <property type="term" value="C:host cell postsynaptic membrane"/>
    <property type="evidence" value="ECO:0007669"/>
    <property type="project" value="UniProtKB-KW"/>
</dbReference>
<dbReference type="GO" id="GO:0090729">
    <property type="term" value="F:toxin activity"/>
    <property type="evidence" value="ECO:0007669"/>
    <property type="project" value="UniProtKB-KW"/>
</dbReference>
<dbReference type="InterPro" id="IPR012625">
    <property type="entry name" value="Hwtx-2-like"/>
</dbReference>
<dbReference type="Pfam" id="PF08089">
    <property type="entry name" value="Toxin_20"/>
    <property type="match status" value="1"/>
</dbReference>
<dbReference type="SUPFAM" id="SSF57059">
    <property type="entry name" value="omega toxin-like"/>
    <property type="match status" value="1"/>
</dbReference>
<dbReference type="PROSITE" id="PS60022">
    <property type="entry name" value="HWTX_2"/>
    <property type="match status" value="1"/>
</dbReference>
<name>H2A12_CYRHA</name>
<comment type="function">
    <text evidence="4">Neurotoxin active on both insects and mammals.</text>
</comment>
<comment type="subunit">
    <text>Monomer.</text>
</comment>
<comment type="subcellular location">
    <subcellularLocation>
        <location>Secreted</location>
    </subcellularLocation>
</comment>
<comment type="tissue specificity">
    <text>Expressed by the venom gland.</text>
</comment>
<comment type="mass spectrometry" mass="4253.38" method="MALDI" evidence="4"/>
<comment type="toxic dose">
    <text evidence="4">LD(50) is 1.41 mg/kg by intracerebroventricular injection into mice.</text>
</comment>
<comment type="toxic dose">
    <text evidence="4">PD(50) is 16 mg/kg in cockroaches.</text>
</comment>
<comment type="similarity">
    <text evidence="5">Belongs to the neurotoxin 12 (Hwtx-2) family. 02 (Hwtx-2) subfamily.</text>
</comment>